<reference key="1">
    <citation type="journal article" date="1984" name="Nucleic Acids Res.">
        <title>Immunoglobulin genes of the kappa light chain type from two human lymphoid cell lines are closely related.</title>
        <authorList>
            <person name="Klobeck H.G."/>
            <person name="Combriato G."/>
            <person name="Zachau H.G."/>
        </authorList>
    </citation>
    <scope>NUCLEOTIDE SEQUENCE [GENOMIC DNA]</scope>
</reference>
<reference key="2">
    <citation type="journal article" date="2005" name="Nature">
        <title>Generation and annotation of the DNA sequences of human chromosomes 2 and 4.</title>
        <authorList>
            <person name="Hillier L.W."/>
            <person name="Graves T.A."/>
            <person name="Fulton R.S."/>
            <person name="Fulton L.A."/>
            <person name="Pepin K.H."/>
            <person name="Minx P."/>
            <person name="Wagner-McPherson C."/>
            <person name="Layman D."/>
            <person name="Wylie K."/>
            <person name="Sekhon M."/>
            <person name="Becker M.C."/>
            <person name="Fewell G.A."/>
            <person name="Delehaunty K.D."/>
            <person name="Miner T.L."/>
            <person name="Nash W.E."/>
            <person name="Kremitzki C."/>
            <person name="Oddy L."/>
            <person name="Du H."/>
            <person name="Sun H."/>
            <person name="Bradshaw-Cordum H."/>
            <person name="Ali J."/>
            <person name="Carter J."/>
            <person name="Cordes M."/>
            <person name="Harris A."/>
            <person name="Isak A."/>
            <person name="van Brunt A."/>
            <person name="Nguyen C."/>
            <person name="Du F."/>
            <person name="Courtney L."/>
            <person name="Kalicki J."/>
            <person name="Ozersky P."/>
            <person name="Abbott S."/>
            <person name="Armstrong J."/>
            <person name="Belter E.A."/>
            <person name="Caruso L."/>
            <person name="Cedroni M."/>
            <person name="Cotton M."/>
            <person name="Davidson T."/>
            <person name="Desai A."/>
            <person name="Elliott G."/>
            <person name="Erb T."/>
            <person name="Fronick C."/>
            <person name="Gaige T."/>
            <person name="Haakenson W."/>
            <person name="Haglund K."/>
            <person name="Holmes A."/>
            <person name="Harkins R."/>
            <person name="Kim K."/>
            <person name="Kruchowski S.S."/>
            <person name="Strong C.M."/>
            <person name="Grewal N."/>
            <person name="Goyea E."/>
            <person name="Hou S."/>
            <person name="Levy A."/>
            <person name="Martinka S."/>
            <person name="Mead K."/>
            <person name="McLellan M.D."/>
            <person name="Meyer R."/>
            <person name="Randall-Maher J."/>
            <person name="Tomlinson C."/>
            <person name="Dauphin-Kohlberg S."/>
            <person name="Kozlowicz-Reilly A."/>
            <person name="Shah N."/>
            <person name="Swearengen-Shahid S."/>
            <person name="Snider J."/>
            <person name="Strong J.T."/>
            <person name="Thompson J."/>
            <person name="Yoakum M."/>
            <person name="Leonard S."/>
            <person name="Pearman C."/>
            <person name="Trani L."/>
            <person name="Radionenko M."/>
            <person name="Waligorski J.E."/>
            <person name="Wang C."/>
            <person name="Rock S.M."/>
            <person name="Tin-Wollam A.-M."/>
            <person name="Maupin R."/>
            <person name="Latreille P."/>
            <person name="Wendl M.C."/>
            <person name="Yang S.-P."/>
            <person name="Pohl C."/>
            <person name="Wallis J.W."/>
            <person name="Spieth J."/>
            <person name="Bieri T.A."/>
            <person name="Berkowicz N."/>
            <person name="Nelson J.O."/>
            <person name="Osborne J."/>
            <person name="Ding L."/>
            <person name="Meyer R."/>
            <person name="Sabo A."/>
            <person name="Shotland Y."/>
            <person name="Sinha P."/>
            <person name="Wohldmann P.E."/>
            <person name="Cook L.L."/>
            <person name="Hickenbotham M.T."/>
            <person name="Eldred J."/>
            <person name="Williams D."/>
            <person name="Jones T.A."/>
            <person name="She X."/>
            <person name="Ciccarelli F.D."/>
            <person name="Izaurralde E."/>
            <person name="Taylor J."/>
            <person name="Schmutz J."/>
            <person name="Myers R.M."/>
            <person name="Cox D.R."/>
            <person name="Huang X."/>
            <person name="McPherson J.D."/>
            <person name="Mardis E.R."/>
            <person name="Clifton S.W."/>
            <person name="Warren W.C."/>
            <person name="Chinwalla A.T."/>
            <person name="Eddy S.R."/>
            <person name="Marra M.A."/>
            <person name="Ovcharenko I."/>
            <person name="Furey T.S."/>
            <person name="Miller W."/>
            <person name="Eichler E.E."/>
            <person name="Bork P."/>
            <person name="Suyama M."/>
            <person name="Torrents D."/>
            <person name="Waterston R.H."/>
            <person name="Wilson R.K."/>
        </authorList>
    </citation>
    <scope>NUCLEOTIDE SEQUENCE [LARGE SCALE GENOMIC DNA] (IMGT ALLELE IGKV1-39*01)</scope>
</reference>
<reference key="3">
    <citation type="journal article" date="1970" name="Hoppe-Seyler's Z. Physiol. Chem.">
        <title>The primary structure of a monoclonal kappa-type immunoglobulin L-chain of subgroup I (Bence-Jones protein Hau): subdivision within subgroups.</title>
        <authorList>
            <person name="Watanabe S."/>
            <person name="Hilschmann N."/>
        </authorList>
    </citation>
    <scope>PROTEIN SEQUENCE OF 23-117</scope>
</reference>
<reference key="4">
    <citation type="journal article" date="1970" name="Science">
        <title>Macroglobulin structure: variable sequence of light and heavy chains.</title>
        <authorList>
            <person name="Kohler H."/>
            <person name="Shimizu A."/>
            <person name="Paul C."/>
            <person name="Putnam F.W."/>
        </authorList>
    </citation>
    <scope>PROTEIN SEQUENCE OF 23-117</scope>
</reference>
<reference key="5">
    <citation type="journal article" date="1971" name="Biochem. J.">
        <title>The amino acid sequence of a human kappa light chain.</title>
        <authorList>
            <person name="Milstein C.P."/>
            <person name="Deverson E.V."/>
        </authorList>
    </citation>
    <scope>PROTEIN SEQUENCE OF 23-117</scope>
</reference>
<reference key="6">
    <citation type="journal article" date="1982" name="Hoppe-Seyler's Z. Physiol. Chem.">
        <title>Primary structure of the variable part of an amyloidogenic Bence-Jones protein (Mev). An unusual insertion in the third hypervariable region of a human kappa-immunoglobulin light chain.</title>
        <authorList>
            <person name="Eulitz M."/>
            <person name="Linke R.P."/>
        </authorList>
    </citation>
    <scope>PROTEIN SEQUENCE OF 23-117</scope>
</reference>
<reference key="7">
    <citation type="journal article" date="2001" name="Exp. Clin. Immunogenet.">
        <title>Nomenclature of the human immunoglobulin kappa (IGK) genes.</title>
        <authorList>
            <person name="Lefranc M.P."/>
        </authorList>
    </citation>
    <scope>NOMEMCLATURE</scope>
</reference>
<reference key="8">
    <citation type="book" date="2001" name="The Immunoglobulin FactsBook.">
        <title>The Immunoglobulin FactsBook.</title>
        <editorList>
            <person name="Lefranc M.P."/>
            <person name="Lefranc G."/>
        </editorList>
        <authorList>
            <person name="Lefranc M.P."/>
            <person name="Lefranc G."/>
        </authorList>
    </citation>
    <scope>NOMENCLATURE</scope>
</reference>
<reference key="9">
    <citation type="journal article" date="2007" name="Annu. Rev. Genet.">
        <title>Immunoglobulin somatic hypermutation.</title>
        <authorList>
            <person name="Teng G."/>
            <person name="Papavasiliou F.N."/>
        </authorList>
    </citation>
    <scope>REVIEW ON SOMATIC HYPERMUTATION</scope>
</reference>
<reference key="10">
    <citation type="journal article" date="2010" name="J. Allergy Clin. Immunol.">
        <title>Structure and function of immunoglobulins.</title>
        <authorList>
            <person name="Schroeder H.W. Jr."/>
            <person name="Cavacini L."/>
        </authorList>
    </citation>
    <scope>REVIEW ON IMMUNOGLOBULINS</scope>
</reference>
<reference key="11">
    <citation type="journal article" date="2012" name="Nat. Rev. Immunol.">
        <title>Molecular programming of B cell memory.</title>
        <authorList>
            <person name="McHeyzer-Williams M."/>
            <person name="Okitsu S."/>
            <person name="Wang N."/>
            <person name="McHeyzer-Williams L."/>
        </authorList>
    </citation>
    <scope>REVIEW ON FUNCTION</scope>
</reference>
<reference key="12">
    <citation type="journal article" date="2014" name="Front. Immunol.">
        <title>Immunoglobulin and T Cell Receptor Genes: IMGT((R)) and the Birth and Rise of Immunoinformatics.</title>
        <authorList>
            <person name="Lefranc M.P."/>
        </authorList>
    </citation>
    <scope>NOMENCLATURE</scope>
</reference>
<reference key="13">
    <citation type="journal article" date="2002" name="J. Struct. Biol.">
        <title>Antiferritin VL homodimer binds human spleen ferritin with high specificity.</title>
        <authorList>
            <person name="Nymalm Y."/>
            <person name="Kravchuk Z."/>
            <person name="Salminen T."/>
            <person name="Chumanevich A.A."/>
            <person name="Dubnovitsky A.P."/>
            <person name="Kankare J."/>
            <person name="Pentikainen O."/>
            <person name="Lehtonen J."/>
            <person name="Arosio P."/>
            <person name="Martsev S."/>
            <person name="Johnson M.S."/>
        </authorList>
    </citation>
    <scope>X-RAY CRYSTALLOGRAPHY (2.8 ANGSTROMS) OF 23-117</scope>
    <scope>DISULFIDE BOND</scope>
</reference>
<dbReference type="EMBL" id="X00965">
    <property type="protein sequence ID" value="CAA25477.1"/>
    <property type="status" value="ALT_SEQ"/>
    <property type="molecule type" value="Genomic_DNA"/>
</dbReference>
<dbReference type="EMBL" id="AC244255">
    <property type="status" value="NOT_ANNOTATED_CDS"/>
    <property type="molecule type" value="Genomic_DNA"/>
</dbReference>
<dbReference type="PIR" id="A01865">
    <property type="entry name" value="K1HUDE"/>
</dbReference>
<dbReference type="PIR" id="A01868">
    <property type="entry name" value="K1HUHU"/>
</dbReference>
<dbReference type="PIR" id="A01872">
    <property type="entry name" value="K1HUOU"/>
</dbReference>
<dbReference type="PIR" id="A01879">
    <property type="entry name" value="K1HUMV"/>
</dbReference>
<dbReference type="PIR" id="A01883">
    <property type="entry name" value="K1HUWK"/>
</dbReference>
<dbReference type="PIR" id="A27594">
    <property type="entry name" value="A27594"/>
</dbReference>
<dbReference type="PDB" id="1F6L">
    <property type="method" value="X-ray"/>
    <property type="resolution" value="2.80 A"/>
    <property type="chains" value="L=23-117"/>
</dbReference>
<dbReference type="PDB" id="3UPA">
    <property type="method" value="X-ray"/>
    <property type="resolution" value="1.80 A"/>
    <property type="chains" value="A/B=23-117"/>
</dbReference>
<dbReference type="PDBsum" id="1F6L"/>
<dbReference type="PDBsum" id="3UPA"/>
<dbReference type="SMR" id="P01597"/>
<dbReference type="FunCoup" id="P01597">
    <property type="interactions" value="401"/>
</dbReference>
<dbReference type="IntAct" id="P01597">
    <property type="interactions" value="1"/>
</dbReference>
<dbReference type="IMGT_GENE-DB" id="IGKV1-39"/>
<dbReference type="CarbonylDB" id="P01597"/>
<dbReference type="BioMuta" id="IGKV1-39"/>
<dbReference type="DMDM" id="125779"/>
<dbReference type="jPOST" id="P01597"/>
<dbReference type="MassIVE" id="P01597"/>
<dbReference type="Ensembl" id="ENST00000498574.1">
    <property type="protein sequence ID" value="ENSP00000419058.1"/>
    <property type="gene ID" value="ENSG00000242371.1"/>
</dbReference>
<dbReference type="Ensembl" id="ENST00000631411.1">
    <property type="protein sequence ID" value="ENSP00000488680.1"/>
    <property type="gene ID" value="ENSG00000282120.1"/>
</dbReference>
<dbReference type="AGR" id="HGNC:5740"/>
<dbReference type="GeneCards" id="IGKV1-39"/>
<dbReference type="HGNC" id="HGNC:5740">
    <property type="gene designation" value="IGKV1-39"/>
</dbReference>
<dbReference type="HPA" id="ENSG00000242371">
    <property type="expression patterns" value="Tissue enhanced (intestine, lymphoid tissue, stomach)"/>
</dbReference>
<dbReference type="neXtProt" id="NX_P01597"/>
<dbReference type="OpenTargets" id="ENSG00000242371"/>
<dbReference type="OpenTargets" id="ENSG00000251546"/>
<dbReference type="VEuPathDB" id="HostDB:ENSG00000242371"/>
<dbReference type="InParanoid" id="P01597"/>
<dbReference type="OMA" id="ARCDIMM"/>
<dbReference type="OrthoDB" id="9629570at2759"/>
<dbReference type="PAN-GO" id="P01597">
    <property type="GO annotations" value="3 GO annotations based on evolutionary models"/>
</dbReference>
<dbReference type="PhylomeDB" id="P01597"/>
<dbReference type="PathwayCommons" id="P01597"/>
<dbReference type="Reactome" id="R-HSA-166663">
    <property type="pathway name" value="Initial triggering of complement"/>
</dbReference>
<dbReference type="Reactome" id="R-HSA-173623">
    <property type="pathway name" value="Classical antibody-mediated complement activation"/>
</dbReference>
<dbReference type="Reactome" id="R-HSA-198933">
    <property type="pathway name" value="Immunoregulatory interactions between a Lymphoid and a non-Lymphoid cell"/>
</dbReference>
<dbReference type="Reactome" id="R-HSA-202733">
    <property type="pathway name" value="Cell surface interactions at the vascular wall"/>
</dbReference>
<dbReference type="Reactome" id="R-HSA-2029481">
    <property type="pathway name" value="FCGR activation"/>
</dbReference>
<dbReference type="Reactome" id="R-HSA-2029482">
    <property type="pathway name" value="Regulation of actin dynamics for phagocytic cup formation"/>
</dbReference>
<dbReference type="Reactome" id="R-HSA-2029485">
    <property type="pathway name" value="Role of phospholipids in phagocytosis"/>
</dbReference>
<dbReference type="Reactome" id="R-HSA-2168880">
    <property type="pathway name" value="Scavenging of heme from plasma"/>
</dbReference>
<dbReference type="Reactome" id="R-HSA-2454202">
    <property type="pathway name" value="Fc epsilon receptor (FCERI) signaling"/>
</dbReference>
<dbReference type="Reactome" id="R-HSA-2730905">
    <property type="pathway name" value="Role of LAT2/NTAL/LAB on calcium mobilization"/>
</dbReference>
<dbReference type="Reactome" id="R-HSA-2871796">
    <property type="pathway name" value="FCERI mediated MAPK activation"/>
</dbReference>
<dbReference type="Reactome" id="R-HSA-2871809">
    <property type="pathway name" value="FCERI mediated Ca+2 mobilization"/>
</dbReference>
<dbReference type="Reactome" id="R-HSA-2871837">
    <property type="pathway name" value="FCERI mediated NF-kB activation"/>
</dbReference>
<dbReference type="Reactome" id="R-HSA-5690714">
    <property type="pathway name" value="CD22 mediated BCR regulation"/>
</dbReference>
<dbReference type="Reactome" id="R-HSA-9664323">
    <property type="pathway name" value="FCGR3A-mediated IL10 synthesis"/>
</dbReference>
<dbReference type="Reactome" id="R-HSA-9664422">
    <property type="pathway name" value="FCGR3A-mediated phagocytosis"/>
</dbReference>
<dbReference type="Reactome" id="R-HSA-9679191">
    <property type="pathway name" value="Potential therapeutics for SARS"/>
</dbReference>
<dbReference type="Reactome" id="R-HSA-977606">
    <property type="pathway name" value="Regulation of Complement cascade"/>
</dbReference>
<dbReference type="Reactome" id="R-HSA-983695">
    <property type="pathway name" value="Antigen activates B Cell Receptor (BCR) leading to generation of second messengers"/>
</dbReference>
<dbReference type="SignaLink" id="P01597"/>
<dbReference type="ChiTaRS" id="IGKV1-39">
    <property type="organism name" value="human"/>
</dbReference>
<dbReference type="EvolutionaryTrace" id="P01597"/>
<dbReference type="Pharos" id="P01597">
    <property type="development level" value="Tdark"/>
</dbReference>
<dbReference type="PRO" id="PR:P01597"/>
<dbReference type="Proteomes" id="UP000005640">
    <property type="component" value="Chromosome 2"/>
</dbReference>
<dbReference type="RNAct" id="P01597">
    <property type="molecule type" value="protein"/>
</dbReference>
<dbReference type="Bgee" id="ENSG00000242371">
    <property type="expression patterns" value="Expressed in duodenum and 80 other cell types or tissues"/>
</dbReference>
<dbReference type="GO" id="GO:0072562">
    <property type="term" value="C:blood microparticle"/>
    <property type="evidence" value="ECO:0007005"/>
    <property type="project" value="UniProtKB"/>
</dbReference>
<dbReference type="GO" id="GO:0070062">
    <property type="term" value="C:extracellular exosome"/>
    <property type="evidence" value="ECO:0007005"/>
    <property type="project" value="UniProtKB"/>
</dbReference>
<dbReference type="GO" id="GO:0005576">
    <property type="term" value="C:extracellular region"/>
    <property type="evidence" value="ECO:0000304"/>
    <property type="project" value="Reactome"/>
</dbReference>
<dbReference type="GO" id="GO:0019814">
    <property type="term" value="C:immunoglobulin complex"/>
    <property type="evidence" value="ECO:0000318"/>
    <property type="project" value="GO_Central"/>
</dbReference>
<dbReference type="GO" id="GO:0005886">
    <property type="term" value="C:plasma membrane"/>
    <property type="evidence" value="ECO:0000304"/>
    <property type="project" value="Reactome"/>
</dbReference>
<dbReference type="GO" id="GO:0003823">
    <property type="term" value="F:antigen binding"/>
    <property type="evidence" value="ECO:0000303"/>
    <property type="project" value="UniProtKB"/>
</dbReference>
<dbReference type="GO" id="GO:0002250">
    <property type="term" value="P:adaptive immune response"/>
    <property type="evidence" value="ECO:0007669"/>
    <property type="project" value="UniProtKB-KW"/>
</dbReference>
<dbReference type="GO" id="GO:0006955">
    <property type="term" value="P:immune response"/>
    <property type="evidence" value="ECO:0000318"/>
    <property type="project" value="GO_Central"/>
</dbReference>
<dbReference type="CDD" id="cd04980">
    <property type="entry name" value="IgV_L_kappa"/>
    <property type="match status" value="1"/>
</dbReference>
<dbReference type="FunFam" id="2.60.40.10:FF:000212">
    <property type="entry name" value="Immunoglobulin kappa chain variable 12-38"/>
    <property type="match status" value="1"/>
</dbReference>
<dbReference type="Gene3D" id="2.60.40.10">
    <property type="entry name" value="Immunoglobulins"/>
    <property type="match status" value="1"/>
</dbReference>
<dbReference type="InterPro" id="IPR007110">
    <property type="entry name" value="Ig-like_dom"/>
</dbReference>
<dbReference type="InterPro" id="IPR036179">
    <property type="entry name" value="Ig-like_dom_sf"/>
</dbReference>
<dbReference type="InterPro" id="IPR013783">
    <property type="entry name" value="Ig-like_fold"/>
</dbReference>
<dbReference type="InterPro" id="IPR003599">
    <property type="entry name" value="Ig_sub"/>
</dbReference>
<dbReference type="InterPro" id="IPR013106">
    <property type="entry name" value="Ig_V-set"/>
</dbReference>
<dbReference type="InterPro" id="IPR050150">
    <property type="entry name" value="IgV_Light_Chain"/>
</dbReference>
<dbReference type="PANTHER" id="PTHR23267">
    <property type="entry name" value="IMMUNOGLOBULIN LIGHT CHAIN"/>
    <property type="match status" value="1"/>
</dbReference>
<dbReference type="Pfam" id="PF07686">
    <property type="entry name" value="V-set"/>
    <property type="match status" value="1"/>
</dbReference>
<dbReference type="SMART" id="SM00409">
    <property type="entry name" value="IG"/>
    <property type="match status" value="1"/>
</dbReference>
<dbReference type="SMART" id="SM00406">
    <property type="entry name" value="IGv"/>
    <property type="match status" value="1"/>
</dbReference>
<dbReference type="SUPFAM" id="SSF48726">
    <property type="entry name" value="Immunoglobulin"/>
    <property type="match status" value="1"/>
</dbReference>
<dbReference type="PROSITE" id="PS50835">
    <property type="entry name" value="IG_LIKE"/>
    <property type="match status" value="1"/>
</dbReference>
<protein>
    <recommendedName>
        <fullName evidence="8 13">Immunoglobulin kappa variable 1-39</fullName>
    </recommendedName>
    <alternativeName>
        <fullName evidence="16">Ig kappa chain V-I region DEE</fullName>
    </alternativeName>
    <alternativeName>
        <fullName evidence="15">Ig kappa chain V-I region Hau</fullName>
    </alternativeName>
    <alternativeName>
        <fullName evidence="19">Ig kappa chain V-I region Mev</fullName>
    </alternativeName>
    <alternativeName>
        <fullName evidence="17">Ig kappa chain V-I region OU</fullName>
    </alternativeName>
    <alternativeName>
        <fullName evidence="18">Ig kappa chain V-I region Walker</fullName>
    </alternativeName>
</protein>
<name>KV139_HUMAN</name>
<evidence type="ECO:0000250" key="1">
    <source>
        <dbReference type="UniProtKB" id="P01602"/>
    </source>
</evidence>
<evidence type="ECO:0000255" key="2">
    <source>
        <dbReference type="PROSITE-ProRule" id="PRU00114"/>
    </source>
</evidence>
<evidence type="ECO:0000269" key="3">
    <source>
    </source>
</evidence>
<evidence type="ECO:0000269" key="4">
    <source>
    </source>
</evidence>
<evidence type="ECO:0000269" key="5">
    <source>
    </source>
</evidence>
<evidence type="ECO:0000269" key="6">
    <source>
    </source>
</evidence>
<evidence type="ECO:0000269" key="7">
    <source>
    </source>
</evidence>
<evidence type="ECO:0000303" key="8">
    <source>
    </source>
</evidence>
<evidence type="ECO:0000303" key="9">
    <source>
    </source>
</evidence>
<evidence type="ECO:0000303" key="10">
    <source>
    </source>
</evidence>
<evidence type="ECO:0000303" key="11">
    <source>
    </source>
</evidence>
<evidence type="ECO:0000303" key="12">
    <source>
    </source>
</evidence>
<evidence type="ECO:0000303" key="13">
    <source ref="8"/>
</evidence>
<evidence type="ECO:0000305" key="14"/>
<evidence type="ECO:0000305" key="15">
    <source>
    </source>
</evidence>
<evidence type="ECO:0000305" key="16">
    <source>
    </source>
</evidence>
<evidence type="ECO:0000305" key="17">
    <source>
    </source>
</evidence>
<evidence type="ECO:0000305" key="18">
    <source>
    </source>
</evidence>
<evidence type="ECO:0000305" key="19">
    <source>
    </source>
</evidence>
<evidence type="ECO:0007829" key="20">
    <source>
        <dbReference type="PDB" id="3UPA"/>
    </source>
</evidence>
<feature type="signal peptide" evidence="4 5 6 7">
    <location>
        <begin position="1"/>
        <end position="22"/>
    </location>
</feature>
<feature type="chain" id="PRO_0000059741" description="Immunoglobulin kappa variable 1-39" evidence="4 5 6 7">
    <location>
        <begin position="23"/>
        <end position="117"/>
    </location>
</feature>
<feature type="domain" description="Ig-like" evidence="2">
    <location>
        <begin position="24"/>
        <end position="117" status="greater than"/>
    </location>
</feature>
<feature type="region of interest" description="Framework-1" evidence="1">
    <location>
        <begin position="23"/>
        <end position="45"/>
    </location>
</feature>
<feature type="region of interest" description="Complementarity-determining-1" evidence="1">
    <location>
        <begin position="46"/>
        <end position="56"/>
    </location>
</feature>
<feature type="region of interest" description="Framework-2" evidence="1">
    <location>
        <begin position="57"/>
        <end position="71"/>
    </location>
</feature>
<feature type="region of interest" description="Complementarity-determining-2" evidence="1">
    <location>
        <begin position="72"/>
        <end position="78"/>
    </location>
</feature>
<feature type="region of interest" description="Framework-3" evidence="1">
    <location>
        <begin position="79"/>
        <end position="110"/>
    </location>
</feature>
<feature type="region of interest" description="Complementarity-determining-3" evidence="1">
    <location>
        <begin position="111"/>
        <end position="117" status="greater than"/>
    </location>
</feature>
<feature type="disulfide bond" evidence="2 3">
    <location>
        <begin position="45"/>
        <end position="110"/>
    </location>
</feature>
<feature type="sequence conflict" description="In Ref. 6; AA sequence." evidence="14" ref="6">
    <original>I</original>
    <variation>D</variation>
    <location>
        <position position="24"/>
    </location>
</feature>
<feature type="sequence conflict" description="In Ref. 6; AA sequence." evidence="14" ref="6">
    <original>T</original>
    <variation>I</variation>
    <location>
        <position position="42"/>
    </location>
</feature>
<feature type="sequence conflict" description="In Ref. 5; AA sequence." evidence="14" ref="5">
    <original>S</original>
    <variation>G</variation>
    <location>
        <position position="48"/>
    </location>
</feature>
<feature type="sequence conflict" description="In Ref. 4; AA sequence." evidence="14" ref="4">
    <original>S</original>
    <variation>T</variation>
    <location>
        <position position="50"/>
    </location>
</feature>
<feature type="sequence conflict" description="In Ref. 6; AA sequence." evidence="14" ref="6">
    <original>ISS</original>
    <variation>SVD</variation>
    <location>
        <begin position="51"/>
        <end position="53"/>
    </location>
</feature>
<feature type="sequence conflict" description="In Ref. 5; AA sequence." evidence="14" ref="5">
    <original>ISS</original>
    <variation>VNK</variation>
    <location>
        <begin position="51"/>
        <end position="53"/>
    </location>
</feature>
<feature type="sequence conflict" description="In Ref. 1; CAA25477." evidence="14" ref="1">
    <original>S</original>
    <variation>N</variation>
    <location>
        <position position="53"/>
    </location>
</feature>
<feature type="sequence conflict" description="In Ref. 3; AA sequence." evidence="14" ref="3">
    <original>N</original>
    <variation>S</variation>
    <location>
        <position position="56"/>
    </location>
</feature>
<feature type="sequence conflict" description="In Ref. 4; AA sequence." evidence="14" ref="4">
    <original>K</original>
    <variation>B</variation>
    <location>
        <position position="67"/>
    </location>
</feature>
<feature type="sequence conflict" description="In Ref. 3; AA sequence." evidence="14" ref="3">
    <original>K</original>
    <variation>Q</variation>
    <location>
        <position position="67"/>
    </location>
</feature>
<feature type="sequence conflict" description="In Ref. 5; AA sequence and 3; AA sequence." evidence="14" ref="5 3">
    <original>L</original>
    <variation>V</variation>
    <location>
        <position position="68"/>
    </location>
</feature>
<feature type="sequence conflict" description="In Ref. 5; AA sequence and 6; AA sequence." evidence="14" ref="5 6">
    <original>Y</original>
    <variation>F</variation>
    <location>
        <position position="71"/>
    </location>
</feature>
<feature type="sequence conflict" description="In Ref. 6; AA sequence." evidence="14" ref="6">
    <original>AA</original>
    <variation>DT</variation>
    <location>
        <begin position="72"/>
        <end position="73"/>
    </location>
</feature>
<feature type="sequence conflict" description="In Ref. 4; AA sequence." evidence="14" ref="4">
    <original>SLQ</original>
    <variation>BLH</variation>
    <location>
        <begin position="75"/>
        <end position="77"/>
    </location>
</feature>
<feature type="sequence conflict" description="In Ref. 6; AA sequence." evidence="14" ref="6">
    <original>S</original>
    <variation>N</variation>
    <location>
        <position position="75"/>
    </location>
</feature>
<feature type="sequence conflict" description="In Ref. 5; AA sequence." evidence="14" ref="5">
    <original>Q</original>
    <variation>K</variation>
    <location>
        <position position="77"/>
    </location>
</feature>
<feature type="sequence conflict" description="In Ref. 3; AA sequence." evidence="14" ref="3">
    <original>Q</original>
    <variation>P</variation>
    <location>
        <position position="77"/>
    </location>
</feature>
<feature type="sequence conflict" description="In Ref. 1; CAA25477." evidence="14" ref="1">
    <original>P</original>
    <variation>T</variation>
    <location>
        <position position="81"/>
    </location>
</feature>
<feature type="sequence conflict" description="In Ref. 6; AA sequence." evidence="14" ref="6">
    <original>SG</original>
    <variation>GR</variation>
    <location>
        <begin position="87"/>
        <end position="88"/>
    </location>
</feature>
<feature type="sequence conflict" description="In Ref. 4; AA sequence." evidence="14" ref="4">
    <original>L</original>
    <variation>F</variation>
    <location>
        <position position="95"/>
    </location>
</feature>
<feature type="sequence conflict" description="In Ref. 5; AA sequence." evidence="14" ref="5">
    <original>SLQ</original>
    <variation>GLL</variation>
    <location>
        <begin position="99"/>
        <end position="101"/>
    </location>
</feature>
<feature type="sequence conflict" description="In Ref. 6; AA sequence." evidence="14" ref="6">
    <original>E</original>
    <variation>D</variation>
    <location>
        <position position="103"/>
    </location>
</feature>
<feature type="sequence conflict" description="In Ref. 1; CAA25477." evidence="14" ref="1">
    <original>F</original>
    <variation>S</variation>
    <location>
        <position position="105"/>
    </location>
</feature>
<feature type="sequence conflict" description="In Ref. 3; AA sequence." evidence="14" ref="3">
    <original>SYS</original>
    <variation>NYI</variation>
    <location>
        <begin position="113"/>
        <end position="115"/>
    </location>
</feature>
<feature type="sequence conflict" description="In Ref. 5; AA sequence and 6; AA sequence." evidence="14" ref="5 6">
    <original>S</original>
    <variation>T</variation>
    <location>
        <position position="115"/>
    </location>
</feature>
<feature type="sequence conflict" description="In Ref. 6; AA sequence." evidence="14" ref="6">
    <original>T</original>
    <variation>N</variation>
    <location>
        <position position="116"/>
    </location>
</feature>
<feature type="sequence conflict" description="In Ref. 4; AA sequence." evidence="14" ref="4">
    <original>T</original>
    <variation>S</variation>
    <location>
        <position position="116"/>
    </location>
</feature>
<feature type="sequence conflict" description="In Ref. 1; CAA25477." evidence="14" ref="1">
    <original>P</original>
    <variation>L</variation>
    <location>
        <position position="117"/>
    </location>
</feature>
<feature type="non-terminal residue">
    <location>
        <position position="117"/>
    </location>
</feature>
<feature type="strand" evidence="20">
    <location>
        <begin position="26"/>
        <end position="29"/>
    </location>
</feature>
<feature type="strand" evidence="20">
    <location>
        <begin position="31"/>
        <end position="35"/>
    </location>
</feature>
<feature type="strand" evidence="20">
    <location>
        <begin position="41"/>
        <end position="49"/>
    </location>
</feature>
<feature type="strand" evidence="20">
    <location>
        <begin position="55"/>
        <end position="60"/>
    </location>
</feature>
<feature type="strand" evidence="20">
    <location>
        <begin position="67"/>
        <end position="71"/>
    </location>
</feature>
<feature type="turn" evidence="20">
    <location>
        <begin position="72"/>
        <end position="74"/>
    </location>
</feature>
<feature type="strand" evidence="20">
    <location>
        <begin position="84"/>
        <end position="89"/>
    </location>
</feature>
<feature type="strand" evidence="20">
    <location>
        <begin position="92"/>
        <end position="99"/>
    </location>
</feature>
<feature type="helix" evidence="20">
    <location>
        <begin position="102"/>
        <end position="104"/>
    </location>
</feature>
<feature type="strand" evidence="20">
    <location>
        <begin position="106"/>
        <end position="112"/>
    </location>
</feature>
<feature type="strand" evidence="20">
    <location>
        <begin position="114"/>
        <end position="117"/>
    </location>
</feature>
<accession>P01597</accession>
<accession>A0A0B4J1Z7</accession>
<accession>A0A0C4DH57</accession>
<accession>A0A0U1RVJ5</accession>
<accession>P01600</accession>
<accession>P01606</accession>
<accession>P01612</accession>
<accession>P04431</accession>
<keyword id="KW-0002">3D-structure</keyword>
<keyword id="KW-1064">Adaptive immunity</keyword>
<keyword id="KW-1003">Cell membrane</keyword>
<keyword id="KW-0903">Direct protein sequencing</keyword>
<keyword id="KW-1015">Disulfide bond</keyword>
<keyword id="KW-0391">Immunity</keyword>
<keyword id="KW-1280">Immunoglobulin</keyword>
<keyword id="KW-0393">Immunoglobulin domain</keyword>
<keyword id="KW-0472">Membrane</keyword>
<keyword id="KW-1185">Reference proteome</keyword>
<keyword id="KW-0964">Secreted</keyword>
<keyword id="KW-0732">Signal</keyword>
<comment type="function">
    <text evidence="9 10 11 12">V region of the variable domain of immunoglobulin light chains that participates in the antigen recognition (PubMed:24600447). Immunoglobulins, also known as antibodies, are membrane-bound or secreted glycoproteins produced by B lymphocytes. In the recognition phase of humoral immunity, the membrane-bound immunoglobulins serve as receptors which, upon binding of a specific antigen, trigger the clonal expansion and differentiation of B lymphocytes into immunoglobulins-secreting plasma cells. Secreted immunoglobulins mediate the effector phase of humoral immunity, which results in the elimination of bound antigens (PubMed:20176268, PubMed:22158414). The antigen binding site is formed by the variable domain of one heavy chain, together with that of its associated light chain. Thus, each immunoglobulin has two antigen binding sites with remarkable affinity for a particular antigen. The variable domains are assembled by a process called V-(D)-J rearrangement and can then be subjected to somatic hypermutations which, after exposure to antigen and selection, allow affinity maturation for a particular antigen (PubMed:17576170, PubMed:20176268).</text>
</comment>
<comment type="subunit">
    <text evidence="10">Immunoglobulins are composed of two identical heavy chains and two identical light chains; disulfide-linked.</text>
</comment>
<comment type="subcellular location">
    <subcellularLocation>
        <location evidence="10 11">Secreted</location>
    </subcellularLocation>
    <subcellularLocation>
        <location evidence="10 11">Cell membrane</location>
    </subcellularLocation>
</comment>
<comment type="polymorphism">
    <text>There are several alleles. The sequence shown is that of IMGT allele IGKV1-39*01.</text>
</comment>
<comment type="caution">
    <text evidence="14">For an example of a full-length immunoglobulin kappa light chain see AC P0DOX7.</text>
</comment>
<comment type="sequence caution" evidence="14">
    <conflict type="miscellaneous discrepancy">
        <sequence resource="EMBL-CDS" id="CAA25477"/>
    </conflict>
    <text>Chimeric DNA. A chimeric DNA corresponding to regions V and J of immunoglobulin kappa light chain.</text>
</comment>
<sequence length="117" mass="12737">MDMRVPAQLLGLLLLWLRGARCDIQMTQSPSSLSASVGDRVTITCRASQSISSYLNWYQQKPGKAPKLLIYAASSLQSGVPSRFSGSGSGTDFTLTISSLQPEDFATYYCQQSYSTP</sequence>
<proteinExistence type="evidence at protein level"/>
<gene>
    <name evidence="8 13" type="primary">IGKV1-39</name>
</gene>
<organism>
    <name type="scientific">Homo sapiens</name>
    <name type="common">Human</name>
    <dbReference type="NCBI Taxonomy" id="9606"/>
    <lineage>
        <taxon>Eukaryota</taxon>
        <taxon>Metazoa</taxon>
        <taxon>Chordata</taxon>
        <taxon>Craniata</taxon>
        <taxon>Vertebrata</taxon>
        <taxon>Euteleostomi</taxon>
        <taxon>Mammalia</taxon>
        <taxon>Eutheria</taxon>
        <taxon>Euarchontoglires</taxon>
        <taxon>Primates</taxon>
        <taxon>Haplorrhini</taxon>
        <taxon>Catarrhini</taxon>
        <taxon>Hominidae</taxon>
        <taxon>Homo</taxon>
    </lineage>
</organism>